<reference key="1">
    <citation type="journal article" date="1998" name="Virology">
        <title>The complete genomic sequence of the modified vaccinia Ankara strain: comparison with other orthopoxviruses.</title>
        <authorList>
            <person name="Antoine G."/>
            <person name="Scheiflinger F."/>
            <person name="Dorner F."/>
            <person name="Falkner F.G."/>
        </authorList>
    </citation>
    <scope>NUCLEOTIDE SEQUENCE [LARGE SCALE GENOMIC DNA]</scope>
</reference>
<reference key="2">
    <citation type="submission" date="2004-04" db="EMBL/GenBank/DDBJ databases">
        <authorList>
            <person name="Esposito J.J."/>
            <person name="Frace M."/>
            <person name="Sammons S.A."/>
            <person name="Olsen-Rasmussen M.S."/>
            <person name="Osborne J."/>
            <person name="Khristova M."/>
            <person name="Wohlhueter R.M."/>
        </authorList>
    </citation>
    <scope>NUCLEOTIDE SEQUENCE [LARGE SCALE GENOMIC DNA]</scope>
    <source>
        <strain>Isolate Acambis 3000</strain>
    </source>
</reference>
<reference evidence="5" key="3">
    <citation type="journal article" date="2019" name="Cell">
        <title>Structural Basis of Poxvirus Transcription: Transcribing and Capping Vaccinia Complexes.</title>
        <authorList>
            <person name="Hillen H.S."/>
            <person name="Bartuli J."/>
            <person name="Grimm C."/>
            <person name="Dienemann C."/>
            <person name="Bedenk K."/>
            <person name="Szalay A.A."/>
            <person name="Fischer U."/>
            <person name="Cramer P."/>
        </authorList>
    </citation>
    <scope>STRUCTURE BY ELECTRON MICROSCOPY (3.10 ANGSTROMS)</scope>
    <scope>FUNCTION</scope>
    <scope>SUBUNIT</scope>
</reference>
<name>RP30_VACCA</name>
<comment type="function">
    <text evidence="3">Part of the DNA-dependent RNA polymerase which catalyzes the transcription of viral DNA into RNA using the four ribonucleoside triphosphates as substrates. Responsible for the transcription of early, intermediate and late genes. DNA-dependent RNA polymerase associates with the early transcription factor (ETF), itself composed of OPG118/D6 and OPG134/A8, thereby allowing the early genes transcription. Late transcription, and probably also intermediate transcription, require newly synthesized RNA polymerase.</text>
</comment>
<comment type="catalytic activity">
    <reaction>
        <text>RNA(n) + a ribonucleoside 5'-triphosphate = RNA(n+1) + diphosphate</text>
        <dbReference type="Rhea" id="RHEA:21248"/>
        <dbReference type="Rhea" id="RHEA-COMP:14527"/>
        <dbReference type="Rhea" id="RHEA-COMP:17342"/>
        <dbReference type="ChEBI" id="CHEBI:33019"/>
        <dbReference type="ChEBI" id="CHEBI:61557"/>
        <dbReference type="ChEBI" id="CHEBI:140395"/>
        <dbReference type="EC" id="2.7.7.6"/>
    </reaction>
</comment>
<comment type="subunit">
    <text evidence="3">The DNA-dependent RNA polymerase (vRNAP) consists of eight subunits encoded by early viral genes and termed according to their apparent molecular masses Rpo147, Rpo132, Rpo35, Rpo30, Rpo22, Rpo19, Rpo18, and Rpo7. The same holoenzyme, with the addition of the transcription-specificity factor RAP94, is used for early gene expression.</text>
</comment>
<comment type="subcellular location">
    <subcellularLocation>
        <location evidence="4">Virion</location>
    </subcellularLocation>
    <subcellularLocation>
        <location evidence="4">Host cytoplasm</location>
    </subcellularLocation>
    <text>All the enzymes and other proteins required to synthesize early mRNAs are packaged within the virion core along with the DNA genome. This is necessary because viral early mRNAs are synthesized within minutes after virus entry into the cell and are extruded through pores in the core particle.</text>
</comment>
<comment type="alternative products">
    <event type="alternative initiation"/>
    <isoform>
        <id>O57187-1</id>
        <name>Long</name>
        <sequence type="displayed"/>
    </isoform>
    <isoform>
        <id>O57187-2</id>
        <name>Short</name>
        <sequence type="described" ref="VSP_018891"/>
    </isoform>
</comment>
<comment type="induction">
    <text evidence="1">Expressed in the early phase of the viral replicative cycle.</text>
</comment>
<comment type="similarity">
    <text evidence="4">Belongs to the poxviridae DNA-directed RNA polymerase 30 kDa subunit family.</text>
</comment>
<protein>
    <recommendedName>
        <fullName>DNA-directed RNA polymerase 30 kDa polypeptide</fullName>
        <ecNumber>2.7.7.6</ecNumber>
    </recommendedName>
</protein>
<proteinExistence type="evidence at protein level"/>
<sequence>MENVYISSYSSNEQTSMAVAATDIRELLSQYVDDANLEDLIEWAMEKSSKYYIKNIGNTKSNIEETKFESKNNIGIEYSKDSRNKLSYRNKPSIATNLEYKTLCDMIKGTSGTEKEFLRYLLFGIKCIKKGVEYNIDKIKDVSYNDYFNVLDEKYNTPCPNCKSRNTTPMMIQTRAADEPPLVRHACRDCKQHFKPPKFRAFRNLNVTTQSIHENKEITEILPDNNPSPPESPEPASPIDDGLIRSTFDRNDEPPEDDE</sequence>
<dbReference type="EC" id="2.7.7.6"/>
<dbReference type="EMBL" id="U94848">
    <property type="protein sequence ID" value="AAB96429.1"/>
    <property type="molecule type" value="Genomic_DNA"/>
</dbReference>
<dbReference type="EMBL" id="AY603355">
    <property type="protein sequence ID" value="AAT10449.1"/>
    <property type="molecule type" value="Genomic_DNA"/>
</dbReference>
<dbReference type="PIR" id="T30797">
    <property type="entry name" value="T30797"/>
</dbReference>
<dbReference type="PDB" id="6RIE">
    <property type="method" value="EM"/>
    <property type="resolution" value="3.10 A"/>
    <property type="chains" value="S=1-259"/>
</dbReference>
<dbReference type="PDBsum" id="6RIE"/>
<dbReference type="SMR" id="O57187"/>
<dbReference type="Proteomes" id="UP000159908">
    <property type="component" value="Segment"/>
</dbReference>
<dbReference type="Proteomes" id="UP000172909">
    <property type="component" value="Segment"/>
</dbReference>
<dbReference type="GO" id="GO:0000428">
    <property type="term" value="C:DNA-directed RNA polymerase complex"/>
    <property type="evidence" value="ECO:0007669"/>
    <property type="project" value="UniProtKB-KW"/>
</dbReference>
<dbReference type="GO" id="GO:0030430">
    <property type="term" value="C:host cell cytoplasm"/>
    <property type="evidence" value="ECO:0007669"/>
    <property type="project" value="UniProtKB-SubCell"/>
</dbReference>
<dbReference type="GO" id="GO:0044423">
    <property type="term" value="C:virion component"/>
    <property type="evidence" value="ECO:0007669"/>
    <property type="project" value="UniProtKB-KW"/>
</dbReference>
<dbReference type="GO" id="GO:0003677">
    <property type="term" value="F:DNA binding"/>
    <property type="evidence" value="ECO:0007669"/>
    <property type="project" value="InterPro"/>
</dbReference>
<dbReference type="GO" id="GO:0003899">
    <property type="term" value="F:DNA-directed RNA polymerase activity"/>
    <property type="evidence" value="ECO:0007669"/>
    <property type="project" value="UniProtKB-EC"/>
</dbReference>
<dbReference type="GO" id="GO:0008270">
    <property type="term" value="F:zinc ion binding"/>
    <property type="evidence" value="ECO:0007669"/>
    <property type="project" value="UniProtKB-KW"/>
</dbReference>
<dbReference type="GO" id="GO:0006351">
    <property type="term" value="P:DNA-templated transcription"/>
    <property type="evidence" value="ECO:0007669"/>
    <property type="project" value="InterPro"/>
</dbReference>
<dbReference type="Gene3D" id="2.20.25.10">
    <property type="match status" value="1"/>
</dbReference>
<dbReference type="InterPro" id="IPR009162">
    <property type="entry name" value="RNA_pol_30_chordopoxvir-type"/>
</dbReference>
<dbReference type="InterPro" id="IPR024394">
    <property type="entry name" value="RNA_pol_30_chordopoxvir-type_N"/>
</dbReference>
<dbReference type="InterPro" id="IPR001222">
    <property type="entry name" value="Znf_TFIIS"/>
</dbReference>
<dbReference type="Pfam" id="PF12410">
    <property type="entry name" value="rpo30_N"/>
    <property type="match status" value="1"/>
</dbReference>
<dbReference type="Pfam" id="PF01096">
    <property type="entry name" value="Zn_ribbon_TFIIS"/>
    <property type="match status" value="1"/>
</dbReference>
<dbReference type="PIRSF" id="PIRSF000745">
    <property type="entry name" value="VAC_RPO30"/>
    <property type="match status" value="1"/>
</dbReference>
<dbReference type="SMART" id="SM00440">
    <property type="entry name" value="ZnF_C2C2"/>
    <property type="match status" value="1"/>
</dbReference>
<dbReference type="SUPFAM" id="SSF57783">
    <property type="entry name" value="Zinc beta-ribbon"/>
    <property type="match status" value="1"/>
</dbReference>
<dbReference type="PROSITE" id="PS00466">
    <property type="entry name" value="ZF_TFIIS_1"/>
    <property type="match status" value="1"/>
</dbReference>
<dbReference type="PROSITE" id="PS51133">
    <property type="entry name" value="ZF_TFIIS_2"/>
    <property type="match status" value="1"/>
</dbReference>
<accession>O57187</accession>
<gene>
    <name type="primary">OPG066</name>
    <name type="synonym">RPO30</name>
    <name type="ordered locus">MVA051L</name>
    <name type="ordered locus">ACAM3000_MVA_051</name>
</gene>
<organismHost>
    <name type="scientific">Homo sapiens</name>
    <name type="common">Human</name>
    <dbReference type="NCBI Taxonomy" id="9606"/>
</organismHost>
<keyword id="KW-0002">3D-structure</keyword>
<keyword id="KW-0024">Alternative initiation</keyword>
<keyword id="KW-0240">DNA-directed RNA polymerase</keyword>
<keyword id="KW-0244">Early protein</keyword>
<keyword id="KW-1035">Host cytoplasm</keyword>
<keyword id="KW-0479">Metal-binding</keyword>
<keyword id="KW-0548">Nucleotidyltransferase</keyword>
<keyword id="KW-0804">Transcription</keyword>
<keyword id="KW-0808">Transferase</keyword>
<keyword id="KW-0946">Virion</keyword>
<keyword id="KW-0862">Zinc</keyword>
<keyword id="KW-0863">Zinc-finger</keyword>
<organism>
    <name type="scientific">Vaccinia virus (strain Ankara)</name>
    <name type="common">VACV</name>
    <dbReference type="NCBI Taxonomy" id="126794"/>
    <lineage>
        <taxon>Viruses</taxon>
        <taxon>Varidnaviria</taxon>
        <taxon>Bamfordvirae</taxon>
        <taxon>Nucleocytoviricota</taxon>
        <taxon>Pokkesviricetes</taxon>
        <taxon>Chitovirales</taxon>
        <taxon>Poxviridae</taxon>
        <taxon>Chordopoxvirinae</taxon>
        <taxon>Orthopoxvirus</taxon>
        <taxon>Vaccinia virus</taxon>
    </lineage>
</organism>
<evidence type="ECO:0000250" key="1">
    <source>
        <dbReference type="UniProtKB" id="P21603"/>
    </source>
</evidence>
<evidence type="ECO:0000256" key="2">
    <source>
        <dbReference type="SAM" id="MobiDB-lite"/>
    </source>
</evidence>
<evidence type="ECO:0000269" key="3">
    <source>
    </source>
</evidence>
<evidence type="ECO:0000305" key="4"/>
<evidence type="ECO:0007744" key="5">
    <source>
        <dbReference type="PDB" id="6RIE"/>
    </source>
</evidence>
<evidence type="ECO:0007829" key="6">
    <source>
        <dbReference type="PDB" id="6RIE"/>
    </source>
</evidence>
<feature type="chain" id="PRO_0000121455" description="DNA-directed RNA polymerase 30 kDa polypeptide">
    <location>
        <begin position="1"/>
        <end position="259"/>
    </location>
</feature>
<feature type="zinc finger region" description="TFIIS-type" evidence="3 5">
    <location>
        <begin position="155"/>
        <end position="195"/>
    </location>
</feature>
<feature type="region of interest" description="Disordered" evidence="2">
    <location>
        <begin position="214"/>
        <end position="259"/>
    </location>
</feature>
<feature type="compositionally biased region" description="Pro residues" evidence="2">
    <location>
        <begin position="226"/>
        <end position="236"/>
    </location>
</feature>
<feature type="binding site" evidence="3 5">
    <location>
        <position position="159"/>
    </location>
    <ligand>
        <name>Zn(2+)</name>
        <dbReference type="ChEBI" id="CHEBI:29105"/>
    </ligand>
</feature>
<feature type="binding site" evidence="3 5">
    <location>
        <position position="162"/>
    </location>
    <ligand>
        <name>Zn(2+)</name>
        <dbReference type="ChEBI" id="CHEBI:29105"/>
    </ligand>
</feature>
<feature type="binding site" evidence="3 5">
    <location>
        <position position="187"/>
    </location>
    <ligand>
        <name>Zn(2+)</name>
        <dbReference type="ChEBI" id="CHEBI:29105"/>
    </ligand>
</feature>
<feature type="binding site" evidence="3 5">
    <location>
        <position position="190"/>
    </location>
    <ligand>
        <name>Zn(2+)</name>
        <dbReference type="ChEBI" id="CHEBI:29105"/>
    </ligand>
</feature>
<feature type="splice variant" id="VSP_018891" description="In isoform Short." evidence="4">
    <location>
        <begin position="1"/>
        <end position="16"/>
    </location>
</feature>
<feature type="helix" evidence="6">
    <location>
        <begin position="37"/>
        <end position="50"/>
    </location>
</feature>
<feature type="helix" evidence="6">
    <location>
        <begin position="70"/>
        <end position="78"/>
    </location>
</feature>
<feature type="helix" evidence="6">
    <location>
        <begin position="102"/>
        <end position="104"/>
    </location>
</feature>
<feature type="turn" evidence="6">
    <location>
        <begin position="105"/>
        <end position="109"/>
    </location>
</feature>
<feature type="helix" evidence="6">
    <location>
        <begin position="114"/>
        <end position="130"/>
    </location>
</feature>
<feature type="strand" evidence="6">
    <location>
        <begin position="136"/>
        <end position="138"/>
    </location>
</feature>
<feature type="helix" evidence="6">
    <location>
        <begin position="144"/>
        <end position="146"/>
    </location>
</feature>